<accession>Q2NKX8</accession>
<accession>Q8NCI1</accession>
<accession>Q96H93</accession>
<accession>Q9NXQ8</accession>
<name>ERC6L_HUMAN</name>
<reference key="1">
    <citation type="journal article" date="2007" name="Cell">
        <title>PICH, a centromere-associated SNF2 family ATPase, is regulated by Plk1 and required for the spindle checkpoint.</title>
        <authorList>
            <person name="Baumann C."/>
            <person name="Koerner R."/>
            <person name="Hofmann K."/>
            <person name="Nigg E.A."/>
        </authorList>
    </citation>
    <scope>NUCLEOTIDE SEQUENCE [MRNA]</scope>
    <scope>SUBCELLULAR LOCATION</scope>
    <scope>PHOSPHORYLATION AT THR-1063</scope>
    <scope>INTERACTION WITH PLK1</scope>
    <scope>MUTAGENESIS OF 127-GLY--THR-129 AND THR-1063</scope>
</reference>
<reference key="2">
    <citation type="journal article" date="2004" name="Genome Res.">
        <title>The status, quality, and expansion of the NIH full-length cDNA project: the Mammalian Gene Collection (MGC).</title>
        <authorList>
            <consortium name="The MGC Project Team"/>
        </authorList>
    </citation>
    <scope>NUCLEOTIDE SEQUENCE [LARGE SCALE MRNA]</scope>
    <source>
        <tissue>Ovary</tissue>
        <tissue>Uterus</tissue>
    </source>
</reference>
<reference key="3">
    <citation type="journal article" date="2004" name="Nat. Genet.">
        <title>Complete sequencing and characterization of 21,243 full-length human cDNAs.</title>
        <authorList>
            <person name="Ota T."/>
            <person name="Suzuki Y."/>
            <person name="Nishikawa T."/>
            <person name="Otsuki T."/>
            <person name="Sugiyama T."/>
            <person name="Irie R."/>
            <person name="Wakamatsu A."/>
            <person name="Hayashi K."/>
            <person name="Sato H."/>
            <person name="Nagai K."/>
            <person name="Kimura K."/>
            <person name="Makita H."/>
            <person name="Sekine M."/>
            <person name="Obayashi M."/>
            <person name="Nishi T."/>
            <person name="Shibahara T."/>
            <person name="Tanaka T."/>
            <person name="Ishii S."/>
            <person name="Yamamoto J."/>
            <person name="Saito K."/>
            <person name="Kawai Y."/>
            <person name="Isono Y."/>
            <person name="Nakamura Y."/>
            <person name="Nagahari K."/>
            <person name="Murakami K."/>
            <person name="Yasuda T."/>
            <person name="Iwayanagi T."/>
            <person name="Wagatsuma M."/>
            <person name="Shiratori A."/>
            <person name="Sudo H."/>
            <person name="Hosoiri T."/>
            <person name="Kaku Y."/>
            <person name="Kodaira H."/>
            <person name="Kondo H."/>
            <person name="Sugawara M."/>
            <person name="Takahashi M."/>
            <person name="Kanda K."/>
            <person name="Yokoi T."/>
            <person name="Furuya T."/>
            <person name="Kikkawa E."/>
            <person name="Omura Y."/>
            <person name="Abe K."/>
            <person name="Kamihara K."/>
            <person name="Katsuta N."/>
            <person name="Sato K."/>
            <person name="Tanikawa M."/>
            <person name="Yamazaki M."/>
            <person name="Ninomiya K."/>
            <person name="Ishibashi T."/>
            <person name="Yamashita H."/>
            <person name="Murakawa K."/>
            <person name="Fujimori K."/>
            <person name="Tanai H."/>
            <person name="Kimata M."/>
            <person name="Watanabe M."/>
            <person name="Hiraoka S."/>
            <person name="Chiba Y."/>
            <person name="Ishida S."/>
            <person name="Ono Y."/>
            <person name="Takiguchi S."/>
            <person name="Watanabe S."/>
            <person name="Yosida M."/>
            <person name="Hotuta T."/>
            <person name="Kusano J."/>
            <person name="Kanehori K."/>
            <person name="Takahashi-Fujii A."/>
            <person name="Hara H."/>
            <person name="Tanase T.-O."/>
            <person name="Nomura Y."/>
            <person name="Togiya S."/>
            <person name="Komai F."/>
            <person name="Hara R."/>
            <person name="Takeuchi K."/>
            <person name="Arita M."/>
            <person name="Imose N."/>
            <person name="Musashino K."/>
            <person name="Yuuki H."/>
            <person name="Oshima A."/>
            <person name="Sasaki N."/>
            <person name="Aotsuka S."/>
            <person name="Yoshikawa Y."/>
            <person name="Matsunawa H."/>
            <person name="Ichihara T."/>
            <person name="Shiohata N."/>
            <person name="Sano S."/>
            <person name="Moriya S."/>
            <person name="Momiyama H."/>
            <person name="Satoh N."/>
            <person name="Takami S."/>
            <person name="Terashima Y."/>
            <person name="Suzuki O."/>
            <person name="Nakagawa S."/>
            <person name="Senoh A."/>
            <person name="Mizoguchi H."/>
            <person name="Goto Y."/>
            <person name="Shimizu F."/>
            <person name="Wakebe H."/>
            <person name="Hishigaki H."/>
            <person name="Watanabe T."/>
            <person name="Sugiyama A."/>
            <person name="Takemoto M."/>
            <person name="Kawakami B."/>
            <person name="Yamazaki M."/>
            <person name="Watanabe K."/>
            <person name="Kumagai A."/>
            <person name="Itakura S."/>
            <person name="Fukuzumi Y."/>
            <person name="Fujimori Y."/>
            <person name="Komiyama M."/>
            <person name="Tashiro H."/>
            <person name="Tanigami A."/>
            <person name="Fujiwara T."/>
            <person name="Ono T."/>
            <person name="Yamada K."/>
            <person name="Fujii Y."/>
            <person name="Ozaki K."/>
            <person name="Hirao M."/>
            <person name="Ohmori Y."/>
            <person name="Kawabata A."/>
            <person name="Hikiji T."/>
            <person name="Kobatake N."/>
            <person name="Inagaki H."/>
            <person name="Ikema Y."/>
            <person name="Okamoto S."/>
            <person name="Okitani R."/>
            <person name="Kawakami T."/>
            <person name="Noguchi S."/>
            <person name="Itoh T."/>
            <person name="Shigeta K."/>
            <person name="Senba T."/>
            <person name="Matsumura K."/>
            <person name="Nakajima Y."/>
            <person name="Mizuno T."/>
            <person name="Morinaga M."/>
            <person name="Sasaki M."/>
            <person name="Togashi T."/>
            <person name="Oyama M."/>
            <person name="Hata H."/>
            <person name="Watanabe M."/>
            <person name="Komatsu T."/>
            <person name="Mizushima-Sugano J."/>
            <person name="Satoh T."/>
            <person name="Shirai Y."/>
            <person name="Takahashi Y."/>
            <person name="Nakagawa K."/>
            <person name="Okumura K."/>
            <person name="Nagase T."/>
            <person name="Nomura N."/>
            <person name="Kikuchi H."/>
            <person name="Masuho Y."/>
            <person name="Yamashita R."/>
            <person name="Nakai K."/>
            <person name="Yada T."/>
            <person name="Nakamura Y."/>
            <person name="Ohara O."/>
            <person name="Isogai T."/>
            <person name="Sugano S."/>
        </authorList>
    </citation>
    <scope>NUCLEOTIDE SEQUENCE [LARGE SCALE MRNA] OF 145-1250</scope>
    <source>
        <tissue>Colon</tissue>
        <tissue>Teratocarcinoma</tissue>
    </source>
</reference>
<reference key="4">
    <citation type="submission" date="2002-06" db="EMBL/GenBank/DDBJ databases">
        <title>Cloning and identification of genes which are differentially expressed in carcinoma.</title>
        <authorList>
            <person name="Xueyuan D."/>
            <person name="Weifeng C."/>
        </authorList>
    </citation>
    <scope>NUCLEOTIDE SEQUENCE [MRNA] OF 603-1250</scope>
</reference>
<reference key="5">
    <citation type="journal article" date="2008" name="Chromosoma">
        <title>Persistence of DNA threads in human anaphase cells suggests late completion of sister chromatid decatenation.</title>
        <authorList>
            <person name="Wang L.-H."/>
            <person name="Schwarzbraun T."/>
            <person name="Speicher M.R."/>
            <person name="Nigg E.A."/>
        </authorList>
    </citation>
    <scope>SUBCELLULAR LOCATION</scope>
</reference>
<reference key="6">
    <citation type="journal article" date="2007" name="EMBO J.">
        <title>BLM is required for faithful chromosome segregation and its localization defines a class of ultrafine anaphase bridges.</title>
        <authorList>
            <person name="Chan K.-L."/>
            <person name="North P.S."/>
            <person name="Hickson I.D."/>
        </authorList>
    </citation>
    <scope>SUBCELLULAR LOCATION</scope>
</reference>
<reference key="7">
    <citation type="journal article" date="2007" name="J. Cell Sci.">
        <title>Depletion of topoisomerase IIalpha leads to shortening of the metaphase interkinetochore distance and abnormal persistence of PICH-coated anaphase threads.</title>
        <authorList>
            <person name="Spence J.M."/>
            <person name="Phua H.-H."/>
            <person name="Mills W."/>
            <person name="Carpenter A.J."/>
            <person name="Porter A.C.G."/>
            <person name="Farr C.J."/>
        </authorList>
    </citation>
    <scope>SUBCELLULAR LOCATION</scope>
</reference>
<reference key="8">
    <citation type="journal article" date="2007" name="Mol. Biol. Cell">
        <title>Use of the novel Plk1 inhibitor ZK-thiazolidinone to elucidate functions of Plk1 in early and late stages of mitosis.</title>
        <authorList>
            <person name="Santamaria A."/>
            <person name="Neef R."/>
            <person name="Eberspaecher U."/>
            <person name="Eis K."/>
            <person name="Husemann M."/>
            <person name="Mumberg D."/>
            <person name="Prechtl S."/>
            <person name="Schulze V."/>
            <person name="Siemeister G."/>
            <person name="Wortmann L."/>
            <person name="Barr F.A."/>
            <person name="Nigg E.A."/>
        </authorList>
    </citation>
    <scope>SUBCELLULAR LOCATION</scope>
    <scope>INTERACTION WITH PLK1</scope>
</reference>
<reference key="9">
    <citation type="journal article" date="2008" name="Mol. Cell">
        <title>Kinase-selective enrichment enables quantitative phosphoproteomics of the kinome across the cell cycle.</title>
        <authorList>
            <person name="Daub H."/>
            <person name="Olsen J.V."/>
            <person name="Bairlein M."/>
            <person name="Gnad F."/>
            <person name="Oppermann F.S."/>
            <person name="Korner R."/>
            <person name="Greff Z."/>
            <person name="Keri G."/>
            <person name="Stemmann O."/>
            <person name="Mann M."/>
        </authorList>
    </citation>
    <scope>PHOSPHORYLATION [LARGE SCALE ANALYSIS] AT SER-14; SER-755; SER-774; SER-1181 AND SER-1188</scope>
    <scope>IDENTIFICATION BY MASS SPECTROMETRY [LARGE SCALE ANALYSIS]</scope>
    <source>
        <tissue>Cervix carcinoma</tissue>
    </source>
</reference>
<reference key="10">
    <citation type="journal article" date="2008" name="Proc. Natl. Acad. Sci. U.S.A.">
        <title>A quantitative atlas of mitotic phosphorylation.</title>
        <authorList>
            <person name="Dephoure N."/>
            <person name="Zhou C."/>
            <person name="Villen J."/>
            <person name="Beausoleil S.A."/>
            <person name="Bakalarski C.E."/>
            <person name="Elledge S.J."/>
            <person name="Gygi S.P."/>
        </authorList>
    </citation>
    <scope>PHOSPHORYLATION [LARGE SCALE ANALYSIS] AT SER-14; SER-810; THR-813; SER-820 AND SER-1028</scope>
    <scope>IDENTIFICATION BY MASS SPECTROMETRY [LARGE SCALE ANALYSIS]</scope>
    <source>
        <tissue>Cervix carcinoma</tissue>
    </source>
</reference>
<reference key="11">
    <citation type="journal article" date="2009" name="Anal. Chem.">
        <title>Lys-N and trypsin cover complementary parts of the phosphoproteome in a refined SCX-based approach.</title>
        <authorList>
            <person name="Gauci S."/>
            <person name="Helbig A.O."/>
            <person name="Slijper M."/>
            <person name="Krijgsveld J."/>
            <person name="Heck A.J."/>
            <person name="Mohammed S."/>
        </authorList>
    </citation>
    <scope>IDENTIFICATION BY MASS SPECTROMETRY [LARGE SCALE ANALYSIS]</scope>
</reference>
<reference key="12">
    <citation type="journal article" date="2009" name="Sci. Signal.">
        <title>Quantitative phosphoproteomic analysis of T cell receptor signaling reveals system-wide modulation of protein-protein interactions.</title>
        <authorList>
            <person name="Mayya V."/>
            <person name="Lundgren D.H."/>
            <person name="Hwang S.-I."/>
            <person name="Rezaul K."/>
            <person name="Wu L."/>
            <person name="Eng J.K."/>
            <person name="Rodionov V."/>
            <person name="Han D.K."/>
        </authorList>
    </citation>
    <scope>PHOSPHORYLATION [LARGE SCALE ANALYSIS] AT SER-1028 AND SER-1098</scope>
    <scope>IDENTIFICATION BY MASS SPECTROMETRY [LARGE SCALE ANALYSIS]</scope>
    <source>
        <tissue>Leukemic T-cell</tissue>
    </source>
</reference>
<reference key="13">
    <citation type="journal article" date="2010" name="Chromosoma">
        <title>Re-examination of siRNA specificity questions role of PICH and Tao1 in the spindle checkpoint and identifies Mad2 as a sensitive target for small RNAs.</title>
        <authorList>
            <person name="Hubner N.C."/>
            <person name="Wang L.H."/>
            <person name="Kaulich M."/>
            <person name="Descombes P."/>
            <person name="Poser I."/>
            <person name="Nigg E.A."/>
        </authorList>
    </citation>
    <scope>LACK OF ROLE IN SPINDLE CHECKPOINT</scope>
</reference>
<reference key="14">
    <citation type="journal article" date="2010" name="Sci. Signal.">
        <title>Quantitative phosphoproteomics reveals widespread full phosphorylation site occupancy during mitosis.</title>
        <authorList>
            <person name="Olsen J.V."/>
            <person name="Vermeulen M."/>
            <person name="Santamaria A."/>
            <person name="Kumar C."/>
            <person name="Miller M.L."/>
            <person name="Jensen L.J."/>
            <person name="Gnad F."/>
            <person name="Cox J."/>
            <person name="Jensen T.S."/>
            <person name="Nigg E.A."/>
            <person name="Brunak S."/>
            <person name="Mann M."/>
        </authorList>
    </citation>
    <scope>PHOSPHORYLATION [LARGE SCALE ANALYSIS] AT SER-14; SER-807; SER-810; SER-995 AND SER-1028</scope>
    <scope>IDENTIFICATION BY MASS SPECTROMETRY [LARGE SCALE ANALYSIS]</scope>
    <source>
        <tissue>Cervix carcinoma</tissue>
    </source>
</reference>
<reference key="15">
    <citation type="journal article" date="2011" name="BMC Syst. Biol.">
        <title>Initial characterization of the human central proteome.</title>
        <authorList>
            <person name="Burkard T.R."/>
            <person name="Planyavsky M."/>
            <person name="Kaupe I."/>
            <person name="Breitwieser F.P."/>
            <person name="Buerckstuemmer T."/>
            <person name="Bennett K.L."/>
            <person name="Superti-Furga G."/>
            <person name="Colinge J."/>
        </authorList>
    </citation>
    <scope>IDENTIFICATION BY MASS SPECTROMETRY [LARGE SCALE ANALYSIS]</scope>
</reference>
<reference key="16">
    <citation type="journal article" date="2011" name="Sci. Signal.">
        <title>System-wide temporal characterization of the proteome and phosphoproteome of human embryonic stem cell differentiation.</title>
        <authorList>
            <person name="Rigbolt K.T."/>
            <person name="Prokhorova T.A."/>
            <person name="Akimov V."/>
            <person name="Henningsen J."/>
            <person name="Johansen P.T."/>
            <person name="Kratchmarova I."/>
            <person name="Kassem M."/>
            <person name="Mann M."/>
            <person name="Olsen J.V."/>
            <person name="Blagoev B."/>
        </authorList>
    </citation>
    <scope>PHOSPHORYLATION [LARGE SCALE ANALYSIS] AT SER-820; SER-1028 AND SER-1069</scope>
    <scope>IDENTIFICATION BY MASS SPECTROMETRY [LARGE SCALE ANALYSIS]</scope>
</reference>
<reference key="17">
    <citation type="journal article" date="2013" name="J. Proteome Res.">
        <title>Toward a comprehensive characterization of a human cancer cell phosphoproteome.</title>
        <authorList>
            <person name="Zhou H."/>
            <person name="Di Palma S."/>
            <person name="Preisinger C."/>
            <person name="Peng M."/>
            <person name="Polat A.N."/>
            <person name="Heck A.J."/>
            <person name="Mohammed S."/>
        </authorList>
    </citation>
    <scope>PHOSPHORYLATION [LARGE SCALE ANALYSIS] AT SER-14; SER-774; SER-807; SER-820; SER-969; SER-971; SER-1028 AND SER-1069</scope>
    <scope>IDENTIFICATION BY MASS SPECTROMETRY [LARGE SCALE ANALYSIS]</scope>
    <source>
        <tissue>Cervix carcinoma</tissue>
        <tissue>Erythroleukemia</tissue>
    </source>
</reference>
<reference key="18">
    <citation type="journal article" date="2013" name="Mol. Cell">
        <title>PICH: a DNA translocase specially adapted for processing anaphase bridge DNA.</title>
        <authorList>
            <person name="Biebricher A."/>
            <person name="Hirano S."/>
            <person name="Enzlin J.H."/>
            <person name="Wiechens N."/>
            <person name="Streicher W.W."/>
            <person name="Huttner D."/>
            <person name="Wang L.H."/>
            <person name="Nigg E.A."/>
            <person name="Owen-Hughes T."/>
            <person name="Liu Y."/>
            <person name="Peterman E."/>
            <person name="Wuite G.J.L."/>
            <person name="Hickson I.D."/>
        </authorList>
    </citation>
    <scope>FUNCTION</scope>
    <scope>CATALYTIC ACTIVITY</scope>
    <scope>MUTAGENESIS OF LYS-128</scope>
</reference>
<reference key="19">
    <citation type="journal article" date="2017" name="Nucleic Acids Res.">
        <title>A novel TPR-BEN domain interaction mediates PICH-BEND3 association.</title>
        <authorList>
            <person name="Pitchai G.P."/>
            <person name="Kaulich M."/>
            <person name="Bizard A.H."/>
            <person name="Mesa P."/>
            <person name="Yao Q."/>
            <person name="Sarlos K."/>
            <person name="Streicher W.W."/>
            <person name="Nigg E.A."/>
            <person name="Montoya G."/>
            <person name="Hickson I.D."/>
        </authorList>
    </citation>
    <scope>X-RAY CRYSTALLOGRAPHY (2.20 ANGSTROMS) OF 10-66 IN COMPLEX WITH BEND3</scope>
    <scope>FUNCTION</scope>
    <scope>CATALYTIC ACTIVITY</scope>
    <scope>INTERACTION WITH BEND3 AND PLK1</scope>
    <scope>MUTAGENESIS OF GLU-11; LEU-13 AND TYR-21</scope>
</reference>
<organism>
    <name type="scientific">Homo sapiens</name>
    <name type="common">Human</name>
    <dbReference type="NCBI Taxonomy" id="9606"/>
    <lineage>
        <taxon>Eukaryota</taxon>
        <taxon>Metazoa</taxon>
        <taxon>Chordata</taxon>
        <taxon>Craniata</taxon>
        <taxon>Vertebrata</taxon>
        <taxon>Euteleostomi</taxon>
        <taxon>Mammalia</taxon>
        <taxon>Eutheria</taxon>
        <taxon>Euarchontoglires</taxon>
        <taxon>Primates</taxon>
        <taxon>Haplorrhini</taxon>
        <taxon>Catarrhini</taxon>
        <taxon>Hominidae</taxon>
        <taxon>Homo</taxon>
    </lineage>
</organism>
<evidence type="ECO:0000250" key="1">
    <source>
        <dbReference type="UniProtKB" id="Q8BHK9"/>
    </source>
</evidence>
<evidence type="ECO:0000255" key="2">
    <source>
        <dbReference type="PROSITE-ProRule" id="PRU00541"/>
    </source>
</evidence>
<evidence type="ECO:0000255" key="3">
    <source>
        <dbReference type="PROSITE-ProRule" id="PRU00542"/>
    </source>
</evidence>
<evidence type="ECO:0000256" key="4">
    <source>
        <dbReference type="SAM" id="MobiDB-lite"/>
    </source>
</evidence>
<evidence type="ECO:0000269" key="5">
    <source>
    </source>
</evidence>
<evidence type="ECO:0000269" key="6">
    <source>
    </source>
</evidence>
<evidence type="ECO:0000269" key="7">
    <source>
    </source>
</evidence>
<evidence type="ECO:0000269" key="8">
    <source>
    </source>
</evidence>
<evidence type="ECO:0000269" key="9">
    <source>
    </source>
</evidence>
<evidence type="ECO:0000269" key="10">
    <source>
    </source>
</evidence>
<evidence type="ECO:0000303" key="11">
    <source>
    </source>
</evidence>
<evidence type="ECO:0000303" key="12">
    <source>
    </source>
</evidence>
<evidence type="ECO:0000305" key="13"/>
<evidence type="ECO:0000305" key="14">
    <source>
    </source>
</evidence>
<evidence type="ECO:0000305" key="15">
    <source>
    </source>
</evidence>
<evidence type="ECO:0007744" key="16">
    <source>
    </source>
</evidence>
<evidence type="ECO:0007744" key="17">
    <source>
    </source>
</evidence>
<evidence type="ECO:0007744" key="18">
    <source>
    </source>
</evidence>
<evidence type="ECO:0007744" key="19">
    <source>
    </source>
</evidence>
<evidence type="ECO:0007744" key="20">
    <source>
    </source>
</evidence>
<evidence type="ECO:0007744" key="21">
    <source>
    </source>
</evidence>
<evidence type="ECO:0007829" key="22">
    <source>
        <dbReference type="PDB" id="5JNO"/>
    </source>
</evidence>
<protein>
    <recommendedName>
        <fullName>DNA excision repair protein ERCC-6-like</fullName>
        <ecNumber evidence="9 10">3.6.4.12</ecNumber>
    </recommendedName>
    <alternativeName>
        <fullName>ATP-dependent helicase ERCC6-like</fullName>
    </alternativeName>
    <alternativeName>
        <fullName>PLK1-interacting checkpoint helicase</fullName>
    </alternativeName>
    <alternativeName>
        <fullName>Tumor antigen BJ-HCC-15</fullName>
    </alternativeName>
</protein>
<dbReference type="EC" id="3.6.4.12" evidence="9 10"/>
<dbReference type="EMBL" id="EU069463">
    <property type="protein sequence ID" value="ABU25227.1"/>
    <property type="molecule type" value="mRNA"/>
</dbReference>
<dbReference type="EMBL" id="BC008808">
    <property type="protein sequence ID" value="AAH08808.2"/>
    <property type="molecule type" value="mRNA"/>
</dbReference>
<dbReference type="EMBL" id="BC111486">
    <property type="protein sequence ID" value="AAI11487.1"/>
    <property type="molecule type" value="mRNA"/>
</dbReference>
<dbReference type="EMBL" id="AK000112">
    <property type="protein sequence ID" value="BAA90952.1"/>
    <property type="status" value="ALT_SEQ"/>
    <property type="molecule type" value="mRNA"/>
</dbReference>
<dbReference type="EMBL" id="AK074719">
    <property type="protein sequence ID" value="BAC11160.1"/>
    <property type="molecule type" value="mRNA"/>
</dbReference>
<dbReference type="EMBL" id="AY121802">
    <property type="protein sequence ID" value="AAM82750.1"/>
    <property type="status" value="ALT_SEQ"/>
    <property type="molecule type" value="mRNA"/>
</dbReference>
<dbReference type="CCDS" id="CCDS35329.1"/>
<dbReference type="RefSeq" id="NP_060139.2">
    <property type="nucleotide sequence ID" value="NM_017669.2"/>
</dbReference>
<dbReference type="PDB" id="5JNO">
    <property type="method" value="X-ray"/>
    <property type="resolution" value="2.20 A"/>
    <property type="chains" value="B=10-66"/>
</dbReference>
<dbReference type="PDBsum" id="5JNO"/>
<dbReference type="SMR" id="Q2NKX8"/>
<dbReference type="BioGRID" id="120176">
    <property type="interactions" value="92"/>
</dbReference>
<dbReference type="ELM" id="Q2NKX8"/>
<dbReference type="FunCoup" id="Q2NKX8">
    <property type="interactions" value="513"/>
</dbReference>
<dbReference type="IntAct" id="Q2NKX8">
    <property type="interactions" value="59"/>
</dbReference>
<dbReference type="MINT" id="Q2NKX8"/>
<dbReference type="STRING" id="9606.ENSP00000334675"/>
<dbReference type="GlyGen" id="Q2NKX8">
    <property type="glycosylation" value="1 site, 1 O-linked glycan (1 site)"/>
</dbReference>
<dbReference type="iPTMnet" id="Q2NKX8"/>
<dbReference type="PhosphoSitePlus" id="Q2NKX8"/>
<dbReference type="BioMuta" id="ERCC6L"/>
<dbReference type="DMDM" id="121948339"/>
<dbReference type="jPOST" id="Q2NKX8"/>
<dbReference type="MassIVE" id="Q2NKX8"/>
<dbReference type="PaxDb" id="9606-ENSP00000334675"/>
<dbReference type="PeptideAtlas" id="Q2NKX8"/>
<dbReference type="ProteomicsDB" id="61414"/>
<dbReference type="Pumba" id="Q2NKX8"/>
<dbReference type="Antibodypedia" id="27876">
    <property type="antibodies" value="210 antibodies from 28 providers"/>
</dbReference>
<dbReference type="DNASU" id="54821"/>
<dbReference type="Ensembl" id="ENST00000334463.4">
    <property type="protein sequence ID" value="ENSP00000334675.3"/>
    <property type="gene ID" value="ENSG00000186871.7"/>
</dbReference>
<dbReference type="GeneID" id="54821"/>
<dbReference type="KEGG" id="hsa:54821"/>
<dbReference type="MANE-Select" id="ENST00000334463.4">
    <property type="protein sequence ID" value="ENSP00000334675.3"/>
    <property type="RefSeq nucleotide sequence ID" value="NM_017669.4"/>
    <property type="RefSeq protein sequence ID" value="NP_060139.2"/>
</dbReference>
<dbReference type="UCSC" id="uc004eaq.2">
    <property type="organism name" value="human"/>
</dbReference>
<dbReference type="AGR" id="HGNC:20794"/>
<dbReference type="CTD" id="54821"/>
<dbReference type="DisGeNET" id="54821"/>
<dbReference type="GeneCards" id="ERCC6L"/>
<dbReference type="HGNC" id="HGNC:20794">
    <property type="gene designation" value="ERCC6L"/>
</dbReference>
<dbReference type="HPA" id="ENSG00000186871">
    <property type="expression patterns" value="Tissue enhanced (bone marrow, lymphoid tissue)"/>
</dbReference>
<dbReference type="MIM" id="300687">
    <property type="type" value="gene"/>
</dbReference>
<dbReference type="neXtProt" id="NX_Q2NKX8"/>
<dbReference type="OpenTargets" id="ENSG00000186871"/>
<dbReference type="PharmGKB" id="PA162385290"/>
<dbReference type="VEuPathDB" id="HostDB:ENSG00000186871"/>
<dbReference type="eggNOG" id="KOG0387">
    <property type="taxonomic scope" value="Eukaryota"/>
</dbReference>
<dbReference type="GeneTree" id="ENSGT00940000156837"/>
<dbReference type="HOGENOM" id="CLU_004666_0_0_1"/>
<dbReference type="InParanoid" id="Q2NKX8"/>
<dbReference type="OMA" id="FTIEDFQ"/>
<dbReference type="OrthoDB" id="413460at2759"/>
<dbReference type="PAN-GO" id="Q2NKX8">
    <property type="GO annotations" value="1 GO annotation based on evolutionary models"/>
</dbReference>
<dbReference type="PhylomeDB" id="Q2NKX8"/>
<dbReference type="TreeFam" id="TF332843"/>
<dbReference type="PathwayCommons" id="Q2NKX8"/>
<dbReference type="Reactome" id="R-HSA-141444">
    <property type="pathway name" value="Amplification of signal from unattached kinetochores via a MAD2 inhibitory signal"/>
</dbReference>
<dbReference type="Reactome" id="R-HSA-2467813">
    <property type="pathway name" value="Separation of Sister Chromatids"/>
</dbReference>
<dbReference type="Reactome" id="R-HSA-2500257">
    <property type="pathway name" value="Resolution of Sister Chromatid Cohesion"/>
</dbReference>
<dbReference type="Reactome" id="R-HSA-5663220">
    <property type="pathway name" value="RHO GTPases Activate Formins"/>
</dbReference>
<dbReference type="Reactome" id="R-HSA-68877">
    <property type="pathway name" value="Mitotic Prometaphase"/>
</dbReference>
<dbReference type="Reactome" id="R-HSA-9648025">
    <property type="pathway name" value="EML4 and NUDC in mitotic spindle formation"/>
</dbReference>
<dbReference type="SignaLink" id="Q2NKX8"/>
<dbReference type="SIGNOR" id="Q2NKX8"/>
<dbReference type="BioGRID-ORCS" id="54821">
    <property type="hits" value="111 hits in 784 CRISPR screens"/>
</dbReference>
<dbReference type="GenomeRNAi" id="54821"/>
<dbReference type="Pharos" id="Q2NKX8">
    <property type="development level" value="Tbio"/>
</dbReference>
<dbReference type="PRO" id="PR:Q2NKX8"/>
<dbReference type="Proteomes" id="UP000005640">
    <property type="component" value="Chromosome X"/>
</dbReference>
<dbReference type="RNAct" id="Q2NKX8">
    <property type="molecule type" value="protein"/>
</dbReference>
<dbReference type="Bgee" id="ENSG00000186871">
    <property type="expression patterns" value="Expressed in secondary oocyte and 80 other cell types or tissues"/>
</dbReference>
<dbReference type="ExpressionAtlas" id="Q2NKX8">
    <property type="expression patterns" value="baseline and differential"/>
</dbReference>
<dbReference type="GO" id="GO:0005829">
    <property type="term" value="C:cytosol"/>
    <property type="evidence" value="ECO:0000304"/>
    <property type="project" value="Reactome"/>
</dbReference>
<dbReference type="GO" id="GO:0000776">
    <property type="term" value="C:kinetochore"/>
    <property type="evidence" value="ECO:0007669"/>
    <property type="project" value="UniProtKB-KW"/>
</dbReference>
<dbReference type="GO" id="GO:0016020">
    <property type="term" value="C:membrane"/>
    <property type="evidence" value="ECO:0007005"/>
    <property type="project" value="UniProtKB"/>
</dbReference>
<dbReference type="GO" id="GO:0005524">
    <property type="term" value="F:ATP binding"/>
    <property type="evidence" value="ECO:0007669"/>
    <property type="project" value="UniProtKB-KW"/>
</dbReference>
<dbReference type="GO" id="GO:0016887">
    <property type="term" value="F:ATP hydrolysis activity"/>
    <property type="evidence" value="ECO:0007669"/>
    <property type="project" value="RHEA"/>
</dbReference>
<dbReference type="GO" id="GO:0003677">
    <property type="term" value="F:DNA binding"/>
    <property type="evidence" value="ECO:0007669"/>
    <property type="project" value="UniProtKB-KW"/>
</dbReference>
<dbReference type="GO" id="GO:0015616">
    <property type="term" value="F:DNA translocase activity"/>
    <property type="evidence" value="ECO:0000314"/>
    <property type="project" value="UniProtKB"/>
</dbReference>
<dbReference type="GO" id="GO:0004386">
    <property type="term" value="F:helicase activity"/>
    <property type="evidence" value="ECO:0007669"/>
    <property type="project" value="UniProtKB-KW"/>
</dbReference>
<dbReference type="GO" id="GO:0051301">
    <property type="term" value="P:cell division"/>
    <property type="evidence" value="ECO:0007669"/>
    <property type="project" value="UniProtKB-KW"/>
</dbReference>
<dbReference type="GO" id="GO:0006281">
    <property type="term" value="P:DNA repair"/>
    <property type="evidence" value="ECO:0000318"/>
    <property type="project" value="GO_Central"/>
</dbReference>
<dbReference type="CDD" id="cd18001">
    <property type="entry name" value="DEXHc_ERCC6L"/>
    <property type="match status" value="1"/>
</dbReference>
<dbReference type="CDD" id="cd18793">
    <property type="entry name" value="SF2_C_SNF"/>
    <property type="match status" value="1"/>
</dbReference>
<dbReference type="FunFam" id="3.40.50.300:FF:001004">
    <property type="entry name" value="DNA excision repair protein ERCC-6-like isoform X1"/>
    <property type="match status" value="1"/>
</dbReference>
<dbReference type="FunFam" id="3.40.50.10810:FF:000029">
    <property type="entry name" value="ERCC excision repair 6-like, spindle assembly checkpoint helicase"/>
    <property type="match status" value="1"/>
</dbReference>
<dbReference type="Gene3D" id="3.40.50.300">
    <property type="entry name" value="P-loop containing nucleotide triphosphate hydrolases"/>
    <property type="match status" value="1"/>
</dbReference>
<dbReference type="Gene3D" id="3.40.50.10810">
    <property type="entry name" value="Tandem AAA-ATPase domain"/>
    <property type="match status" value="1"/>
</dbReference>
<dbReference type="InterPro" id="IPR014001">
    <property type="entry name" value="Helicase_ATP-bd"/>
</dbReference>
<dbReference type="InterPro" id="IPR001650">
    <property type="entry name" value="Helicase_C-like"/>
</dbReference>
<dbReference type="InterPro" id="IPR027417">
    <property type="entry name" value="P-loop_NTPase"/>
</dbReference>
<dbReference type="InterPro" id="IPR038718">
    <property type="entry name" value="SNF2-like_sf"/>
</dbReference>
<dbReference type="InterPro" id="IPR049730">
    <property type="entry name" value="SNF2/RAD54-like_C"/>
</dbReference>
<dbReference type="InterPro" id="IPR000330">
    <property type="entry name" value="SNF2_N"/>
</dbReference>
<dbReference type="InterPro" id="IPR050496">
    <property type="entry name" value="SNF2_RAD54_helicase_repair"/>
</dbReference>
<dbReference type="PANTHER" id="PTHR45629:SF7">
    <property type="entry name" value="DNA EXCISION REPAIR PROTEIN ERCC-6-RELATED"/>
    <property type="match status" value="1"/>
</dbReference>
<dbReference type="PANTHER" id="PTHR45629">
    <property type="entry name" value="SNF2/RAD54 FAMILY MEMBER"/>
    <property type="match status" value="1"/>
</dbReference>
<dbReference type="Pfam" id="PF00271">
    <property type="entry name" value="Helicase_C"/>
    <property type="match status" value="1"/>
</dbReference>
<dbReference type="Pfam" id="PF00176">
    <property type="entry name" value="SNF2-rel_dom"/>
    <property type="match status" value="1"/>
</dbReference>
<dbReference type="SMART" id="SM00487">
    <property type="entry name" value="DEXDc"/>
    <property type="match status" value="1"/>
</dbReference>
<dbReference type="SMART" id="SM00490">
    <property type="entry name" value="HELICc"/>
    <property type="match status" value="1"/>
</dbReference>
<dbReference type="SUPFAM" id="SSF52540">
    <property type="entry name" value="P-loop containing nucleoside triphosphate hydrolases"/>
    <property type="match status" value="2"/>
</dbReference>
<dbReference type="PROSITE" id="PS51192">
    <property type="entry name" value="HELICASE_ATP_BIND_1"/>
    <property type="match status" value="1"/>
</dbReference>
<dbReference type="PROSITE" id="PS51194">
    <property type="entry name" value="HELICASE_CTER"/>
    <property type="match status" value="1"/>
</dbReference>
<dbReference type="PROSITE" id="PS50293">
    <property type="entry name" value="TPR_REGION"/>
    <property type="match status" value="2"/>
</dbReference>
<gene>
    <name type="primary">ERCC6L</name>
    <name evidence="11 12" type="synonym">PICH</name>
</gene>
<keyword id="KW-0002">3D-structure</keyword>
<keyword id="KW-0067">ATP-binding</keyword>
<keyword id="KW-0131">Cell cycle</keyword>
<keyword id="KW-0132">Cell division</keyword>
<keyword id="KW-0137">Centromere</keyword>
<keyword id="KW-0158">Chromosome</keyword>
<keyword id="KW-0238">DNA-binding</keyword>
<keyword id="KW-0347">Helicase</keyword>
<keyword id="KW-0378">Hydrolase</keyword>
<keyword id="KW-0995">Kinetochore</keyword>
<keyword id="KW-0498">Mitosis</keyword>
<keyword id="KW-0547">Nucleotide-binding</keyword>
<keyword id="KW-0597">Phosphoprotein</keyword>
<keyword id="KW-1267">Proteomics identification</keyword>
<keyword id="KW-1185">Reference proteome</keyword>
<keyword id="KW-0677">Repeat</keyword>
<keyword id="KW-0802">TPR repeat</keyword>
<sequence>MEASRRFPEAEALSPEQAAHYLRYVKEAKEATKNGDLEEAFKLFNLAKDIFPNEKVLSRIQKIQEALEELAEQGDDEFTDVCNSGLLLYRELHNQLFEHQKEGIAFLYSLYRDGRKGGILADDMGLGKTVQIIAFLSGMFDASLVNHVLLIMPTNLINTWVKEFIKWTPGMRVKTFHGPSKDERTRNLNRIQQRNGVIITTYQMLINNWQQLSSFRGQEFVWDYVILDEAHKIKTSSTKSAICARAIPASNRLLLTGTPIQNNLQELWSLFDFACQGSLLGTLKTFKMEYENPITRAREKDATPGEKALGFKISENLMAIIKPYFLRRTKEDVQKKKSSNPEARLNEKNPDVDAICEMPSLSRKNDLIIWIRLVPLQEEIYRKFVSLDHIKELLMETRSPLAELGVLKKLCDHPRLLSARACCLLNLGTFSAQDGNEGEDSPDVDHIDQVTDDTLMEESGKMIFLMDLLKRLRDEGHQTLVFSQSRQILNIIERLLKNRHFKTLRIDGTVTHLLEREKRINLFQQNKDYSVFLLTTQVGGVGLTLTAATRVVIFDPSWNPATDAQAVDRVYRIGQKENVVVYRLITCGTVEEKIYRRQVFKDSLIRQTTGEKKNPFRYFSKQELRELFTIEDLQNSVTQLQLQSLHAAQRKSDIKLDEHIAYLQSLGIAGISDHDLMYTCDLSVKEELDVVEESHYIQQRVQKAQFLVEFESQNKEFLMEQQRTRNEGAWLREPVFPSSTKKKCPKLNKPQPQPSPLLSTHHTQEEDISSKMASVVIDDLPKEGEKQDLSSIKVNVTTLQDGKGTGSADSIATLPKGFGSVEELCTNSSLGMEKSFATKNEAVQKETLQEGPKQEALQEDPLESFNYVLSKSTKADIGPNLDQLKDDEILRHCNPWPIISITNESQNAESNVSIIEIADDLSASHSALQDAQASEAKLEEEPSASSPQYACDFNLFLEDSADNRQNFSSQSLEHVEKENSLCGSAPNSRAGFVHSKTCLSWEFSEKDDEPEEVVVKAKIRSKARRIVSDGEDEDDSFKDTSSINPFNTSLFQFSSVKQFDASTPKNDISPPGRFFSSQIPSSVNKSMNSRRSLASRRSLINMVLDHVEDMEERLDDSSEAKGPEDYPEEGVEESSGEASKYTEEDPSGETLSSENKSSWLMTSKPSALAQETSLGAPEPLSGEQLVGSPQDKAAEATNDYETLVKRGKELKECGKIQEALNCLVKALDIKSADPEVMLLTLSLYKQLNNN</sequence>
<feature type="chain" id="PRO_0000328831" description="DNA excision repair protein ERCC-6-like">
    <location>
        <begin position="1"/>
        <end position="1250"/>
    </location>
</feature>
<feature type="repeat" description="TPR 1">
    <location>
        <begin position="21"/>
        <end position="54"/>
    </location>
</feature>
<feature type="domain" description="Helicase ATP-binding" evidence="2">
    <location>
        <begin position="109"/>
        <end position="277"/>
    </location>
</feature>
<feature type="domain" description="Helicase C-terminal" evidence="3">
    <location>
        <begin position="464"/>
        <end position="620"/>
    </location>
</feature>
<feature type="repeat" description="TPR 2">
    <location>
        <begin position="1200"/>
        <end position="1233"/>
    </location>
</feature>
<feature type="region of interest" description="Disordered" evidence="4">
    <location>
        <begin position="735"/>
        <end position="768"/>
    </location>
</feature>
<feature type="region of interest" description="Disordered" evidence="4">
    <location>
        <begin position="926"/>
        <end position="946"/>
    </location>
</feature>
<feature type="region of interest" description="Disordered" evidence="4">
    <location>
        <begin position="1061"/>
        <end position="1092"/>
    </location>
</feature>
<feature type="region of interest" description="Disordered" evidence="4">
    <location>
        <begin position="1110"/>
        <end position="1199"/>
    </location>
</feature>
<feature type="short sequence motif" description="DEAH box">
    <location>
        <begin position="228"/>
        <end position="231"/>
    </location>
</feature>
<feature type="compositionally biased region" description="Polar residues" evidence="4">
    <location>
        <begin position="1075"/>
        <end position="1087"/>
    </location>
</feature>
<feature type="compositionally biased region" description="Basic and acidic residues" evidence="4">
    <location>
        <begin position="1115"/>
        <end position="1124"/>
    </location>
</feature>
<feature type="compositionally biased region" description="Acidic residues" evidence="4">
    <location>
        <begin position="1125"/>
        <end position="1135"/>
    </location>
</feature>
<feature type="compositionally biased region" description="Polar residues" evidence="4">
    <location>
        <begin position="1149"/>
        <end position="1173"/>
    </location>
</feature>
<feature type="binding site" evidence="13">
    <location>
        <begin position="122"/>
        <end position="129"/>
    </location>
    <ligand>
        <name>ATP</name>
        <dbReference type="ChEBI" id="CHEBI:30616"/>
    </ligand>
</feature>
<feature type="modified residue" description="Phosphoserine" evidence="16 17 19 21">
    <location>
        <position position="14"/>
    </location>
</feature>
<feature type="modified residue" description="Phosphoserine" evidence="17">
    <location>
        <position position="755"/>
    </location>
</feature>
<feature type="modified residue" description="Phosphoserine" evidence="17 21">
    <location>
        <position position="774"/>
    </location>
</feature>
<feature type="modified residue" description="Phosphoserine" evidence="19 21">
    <location>
        <position position="807"/>
    </location>
</feature>
<feature type="modified residue" description="Phosphoserine" evidence="16 19">
    <location>
        <position position="810"/>
    </location>
</feature>
<feature type="modified residue" description="Phosphothreonine" evidence="16">
    <location>
        <position position="813"/>
    </location>
</feature>
<feature type="modified residue" description="Phosphoserine" evidence="16 20 21">
    <location>
        <position position="820"/>
    </location>
</feature>
<feature type="modified residue" description="Phosphoserine" evidence="21">
    <location>
        <position position="969"/>
    </location>
</feature>
<feature type="modified residue" description="Phosphoserine" evidence="21">
    <location>
        <position position="971"/>
    </location>
</feature>
<feature type="modified residue" description="Phosphoserine" evidence="19">
    <location>
        <position position="995"/>
    </location>
</feature>
<feature type="modified residue" description="Phosphoserine" evidence="1">
    <location>
        <position position="1004"/>
    </location>
</feature>
<feature type="modified residue" description="Phosphoserine" evidence="16 18 19 20 21">
    <location>
        <position position="1028"/>
    </location>
</feature>
<feature type="modified residue" description="Phosphothreonine; by PLK1" evidence="5">
    <location>
        <position position="1063"/>
    </location>
</feature>
<feature type="modified residue" description="Phosphoserine" evidence="20 21">
    <location>
        <position position="1069"/>
    </location>
</feature>
<feature type="modified residue" description="Phosphoserine" evidence="18">
    <location>
        <position position="1098"/>
    </location>
</feature>
<feature type="modified residue" description="Phosphoserine" evidence="1">
    <location>
        <position position="1118"/>
    </location>
</feature>
<feature type="modified residue" description="Phosphoserine" evidence="17">
    <location>
        <position position="1181"/>
    </location>
</feature>
<feature type="modified residue" description="Phosphoserine" evidence="17">
    <location>
        <position position="1188"/>
    </location>
</feature>
<feature type="mutagenesis site" description="Decreased affinity for BEND3, and abolishes BEND3-mediated stimulation of ATPase activity; when associated with A-13 and A-21." evidence="10">
    <original>E</original>
    <variation>A</variation>
    <location>
        <position position="11"/>
    </location>
</feature>
<feature type="mutagenesis site" description="Decreased affinity for BEND3, and abolishes BEND3-mediated stimulation of ATPase activity; when associated with A-11 and A-21." evidence="10">
    <original>L</original>
    <variation>A</variation>
    <location>
        <position position="13"/>
    </location>
</feature>
<feature type="mutagenesis site" description="Decreased affinity for BEND3, and abolishes BEND3-mediated stimulation of ATPase activity; when associated with A-11 and A-13." evidence="10">
    <original>Y</original>
    <variation>A</variation>
    <location>
        <position position="21"/>
    </location>
</feature>
<feature type="mutagenesis site" description="Abolishes chromatin association." evidence="5">
    <original>GKT</original>
    <variation>AAA</variation>
    <location>
        <begin position="127"/>
        <end position="129"/>
    </location>
</feature>
<feature type="mutagenesis site" description="Abolishes ATPase activity." evidence="9">
    <original>K</original>
    <variation>A</variation>
    <location>
        <position position="128"/>
    </location>
</feature>
<feature type="mutagenesis site" description="Induces a decrease in phosphorylation." evidence="5">
    <original>T</original>
    <variation>A</variation>
    <location>
        <position position="1063"/>
    </location>
</feature>
<feature type="sequence conflict" description="In Ref. 3; BAC11160." evidence="13" ref="3">
    <original>V</original>
    <variation>M</variation>
    <location>
        <position position="145"/>
    </location>
</feature>
<feature type="sequence conflict" description="In Ref. 3; BAC11160." evidence="13" ref="3">
    <original>R</original>
    <variation>G</variation>
    <location>
        <position position="172"/>
    </location>
</feature>
<feature type="sequence conflict" description="In Ref. 3; BAA90952 and 4; AAM82750." evidence="13" ref="3 4">
    <original>A</original>
    <variation>T</variation>
    <location>
        <position position="812"/>
    </location>
</feature>
<feature type="sequence conflict" description="In Ref. 3; BAC11160." evidence="13" ref="3">
    <original>I</original>
    <variation>V</variation>
    <location>
        <position position="889"/>
    </location>
</feature>
<feature type="sequence conflict" description="In Ref. 3; BAA90952 and 4; AAM82750." evidence="13" ref="3 4">
    <original>R</original>
    <variation>K</variation>
    <location>
        <position position="989"/>
    </location>
</feature>
<feature type="helix" evidence="22">
    <location>
        <begin position="15"/>
        <end position="34"/>
    </location>
</feature>
<feature type="helix" evidence="22">
    <location>
        <begin position="37"/>
        <end position="50"/>
    </location>
</feature>
<feature type="helix" evidence="22">
    <location>
        <begin position="54"/>
        <end position="57"/>
    </location>
</feature>
<proteinExistence type="evidence at protein level"/>
<comment type="function">
    <text evidence="5 9 10">DNA helicase that acts as a tension sensor that associates with catenated DNA which is stretched under tension until it is resolved during anaphase (PubMed:17218258, PubMed:23973328). Functions as ATP-dependent DNA translocase (PubMed:23973328, PubMed:28977671). Can promote Holliday junction branch migration (in vitro) (PubMed:23973328).</text>
</comment>
<comment type="catalytic activity">
    <reaction evidence="9 10">
        <text>ATP + H2O = ADP + phosphate + H(+)</text>
        <dbReference type="Rhea" id="RHEA:13065"/>
        <dbReference type="ChEBI" id="CHEBI:15377"/>
        <dbReference type="ChEBI" id="CHEBI:15378"/>
        <dbReference type="ChEBI" id="CHEBI:30616"/>
        <dbReference type="ChEBI" id="CHEBI:43474"/>
        <dbReference type="ChEBI" id="CHEBI:456216"/>
        <dbReference type="EC" id="3.6.4.12"/>
    </reaction>
</comment>
<comment type="subunit">
    <text evidence="5 6 10">Interacts with PLK1, which phosphorylates it (PubMed:17218258, PubMed:17671160, PubMed:28977671). Both proteins are mutually dependent on each other for correct subcellular localization (PubMed:17218258, PubMed:17671160). Interacts (via N-terminal TPR repeat) with BEND3 (via BEN domains 1 and 3); the interaction is direct (PubMed:28977671).</text>
</comment>
<comment type="interaction">
    <interactant intactId="EBI-1042535">
        <id>Q2NKX8</id>
    </interactant>
    <interactant intactId="EBI-466029">
        <id>P42858</id>
        <label>HTT</label>
    </interactant>
    <organismsDiffer>false</organismsDiffer>
    <experiments>20</experiments>
</comment>
<comment type="interaction">
    <interactant intactId="EBI-1042535">
        <id>Q2NKX8</id>
    </interactant>
    <interactant intactId="EBI-2798728">
        <id>P61968</id>
        <label>LMO4</label>
    </interactant>
    <organismsDiffer>false</organismsDiffer>
    <experiments>3</experiments>
</comment>
<comment type="interaction">
    <interactant intactId="EBI-1042535">
        <id>Q2NKX8</id>
    </interactant>
    <interactant intactId="EBI-476768">
        <id>P53350</id>
        <label>PLK1</label>
    </interactant>
    <organismsDiffer>false</organismsDiffer>
    <experiments>6</experiments>
</comment>
<comment type="interaction">
    <interactant intactId="EBI-1042535">
        <id>Q2NKX8</id>
    </interactant>
    <interactant intactId="EBI-720609">
        <id>O76024</id>
        <label>WFS1</label>
    </interactant>
    <organismsDiffer>false</organismsDiffer>
    <experiments>3</experiments>
</comment>
<comment type="subcellular location">
    <subcellularLocation>
        <location evidence="5 8">Chromosome</location>
        <location evidence="5 8">Centromere</location>
    </subcellularLocation>
    <subcellularLocation>
        <location evidence="5">Chromosome</location>
        <location evidence="5">Centromere</location>
        <location evidence="5">Kinetochore</location>
    </subcellularLocation>
    <subcellularLocation>
        <location evidence="5 6 8">Chromosome</location>
    </subcellularLocation>
    <text evidence="5 6 7 8">Localizes to kinetochores, inner centromeres and thin threads connecting separating chromosomes even during anaphase. In prometaphase cells, it mostly concentrates in between kinetochores. In metaphase, it localizes to numerous thin threads that stretch between sister kinetochores of the aligned chromosomes and are composed of catenated centromeric DNA. Evolution from inner centromeres to thin threads takes place in response to tension. Resolution of thin threads requires topoisomerase 2-alpha (TOP2A) after anaphase onset.</text>
</comment>
<comment type="PTM">
    <text evidence="5">Phosphorylation by PLK1 prevents the association with chromosome arms and restricts its localization to the kinetochore-centromere region.</text>
</comment>
<comment type="similarity">
    <text evidence="13">Belongs to the SNF2/RAD54 helicase family.</text>
</comment>
<comment type="caution">
    <text evidence="14 15">Was initially thought to play a role in the spindle checkpoint. However, it was later shown that phenotypes initially observed are due to off-target effects of the siRNA used which results in MAD2L1 down-regulation and mis-localization.</text>
</comment>
<comment type="sequence caution" evidence="13">
    <conflict type="erroneous termination">
        <sequence resource="EMBL-CDS" id="AAM82750"/>
    </conflict>
    <text>Truncated C-terminus.</text>
</comment>
<comment type="sequence caution" evidence="13">
    <conflict type="erroneous termination">
        <sequence resource="EMBL-CDS" id="BAA90952"/>
    </conflict>
    <text>Truncated C-terminus.</text>
</comment>